<accession>Q44540</accession>
<organism>
    <name type="scientific">Azotobacter vinelandii</name>
    <dbReference type="NCBI Taxonomy" id="354"/>
    <lineage>
        <taxon>Bacteria</taxon>
        <taxon>Pseudomonadati</taxon>
        <taxon>Pseudomonadota</taxon>
        <taxon>Gammaproteobacteria</taxon>
        <taxon>Pseudomonadales</taxon>
        <taxon>Pseudomonadaceae</taxon>
        <taxon>Azotobacter</taxon>
    </lineage>
</organism>
<evidence type="ECO:0000305" key="1"/>
<feature type="chain" id="PRO_0000077025" description="Uncharacterized protein in nifU 5'region">
    <location>
        <begin position="1"/>
        <end position="107"/>
    </location>
</feature>
<proteinExistence type="inferred from homology"/>
<protein>
    <recommendedName>
        <fullName>Uncharacterized protein in nifU 5'region</fullName>
    </recommendedName>
    <alternativeName>
        <fullName>ORF6</fullName>
    </alternativeName>
</protein>
<reference key="1">
    <citation type="journal article" date="1989" name="J. Bacteriol.">
        <title>Physical and genetic map of the major nif gene cluster from Azotobacter vinelandii.</title>
        <authorList>
            <person name="Jacobson M.R."/>
            <person name="Brigle K.E."/>
            <person name="Bennett L.T."/>
            <person name="Setterquist R.A."/>
            <person name="Wilson M.S."/>
            <person name="Cash V.L."/>
            <person name="Beynon J."/>
            <person name="Newton W.E."/>
            <person name="Dean D.R."/>
        </authorList>
    </citation>
    <scope>NUCLEOTIDE SEQUENCE [GENOMIC DNA]</scope>
    <source>
        <strain>ATCC 13705 / OP1 / DSM 366 / NCIMB 11614 / LMG 3878 / UW</strain>
    </source>
</reference>
<dbReference type="EMBL" id="M20568">
    <property type="protein sequence ID" value="AAA64724.1"/>
    <property type="molecule type" value="Genomic_DNA"/>
</dbReference>
<dbReference type="RefSeq" id="WP_012698852.1">
    <property type="nucleotide sequence ID" value="NZ_FPKM01000020.1"/>
</dbReference>
<dbReference type="SMR" id="Q44540"/>
<dbReference type="GeneID" id="88183625"/>
<dbReference type="OMA" id="QTCEPAD"/>
<dbReference type="GO" id="GO:0051537">
    <property type="term" value="F:2 iron, 2 sulfur cluster binding"/>
    <property type="evidence" value="ECO:0007669"/>
    <property type="project" value="TreeGrafter"/>
</dbReference>
<dbReference type="GO" id="GO:0051539">
    <property type="term" value="F:4 iron, 4 sulfur cluster binding"/>
    <property type="evidence" value="ECO:0007669"/>
    <property type="project" value="TreeGrafter"/>
</dbReference>
<dbReference type="GO" id="GO:0005506">
    <property type="term" value="F:iron ion binding"/>
    <property type="evidence" value="ECO:0007669"/>
    <property type="project" value="TreeGrafter"/>
</dbReference>
<dbReference type="GO" id="GO:0016226">
    <property type="term" value="P:iron-sulfur cluster assembly"/>
    <property type="evidence" value="ECO:0007669"/>
    <property type="project" value="InterPro"/>
</dbReference>
<dbReference type="Gene3D" id="2.60.300.12">
    <property type="entry name" value="HesB-like domain"/>
    <property type="match status" value="1"/>
</dbReference>
<dbReference type="InterPro" id="IPR000361">
    <property type="entry name" value="FeS_biogenesis"/>
</dbReference>
<dbReference type="InterPro" id="IPR016092">
    <property type="entry name" value="FeS_cluster_insertion"/>
</dbReference>
<dbReference type="InterPro" id="IPR017870">
    <property type="entry name" value="FeS_cluster_insertion_CS"/>
</dbReference>
<dbReference type="InterPro" id="IPR035903">
    <property type="entry name" value="HesB-like_dom_sf"/>
</dbReference>
<dbReference type="NCBIfam" id="TIGR00049">
    <property type="entry name" value="iron-sulfur cluster assembly accessory protein"/>
    <property type="match status" value="1"/>
</dbReference>
<dbReference type="PANTHER" id="PTHR43011">
    <property type="entry name" value="IRON-SULFUR CLUSTER ASSEMBLY 2 HOMOLOG, MITOCHONDRIAL"/>
    <property type="match status" value="1"/>
</dbReference>
<dbReference type="PANTHER" id="PTHR43011:SF1">
    <property type="entry name" value="IRON-SULFUR CLUSTER ASSEMBLY 2 HOMOLOG, MITOCHONDRIAL"/>
    <property type="match status" value="1"/>
</dbReference>
<dbReference type="Pfam" id="PF01521">
    <property type="entry name" value="Fe-S_biosyn"/>
    <property type="match status" value="1"/>
</dbReference>
<dbReference type="SUPFAM" id="SSF89360">
    <property type="entry name" value="HesB-like domain"/>
    <property type="match status" value="1"/>
</dbReference>
<dbReference type="PROSITE" id="PS01152">
    <property type="entry name" value="HESB"/>
    <property type="match status" value="1"/>
</dbReference>
<sequence length="107" mass="11048">MITLTESAKSAVTRFISSTGKPIAGLRIRVEGGGCSGLKYSLKLEEAGAEDDQLVDCDGITLLIDSASAPLLDGVTMDFVESMEGSGFTFVNPNATNSCGCGKSFAC</sequence>
<comment type="similarity">
    <text evidence="1">Belongs to the HesB/IscA family.</text>
</comment>
<name>YNIU_AZOVI</name>